<evidence type="ECO:0000255" key="1">
    <source>
        <dbReference type="HAMAP-Rule" id="MF_00110"/>
    </source>
</evidence>
<organism>
    <name type="scientific">Edwardsiella ictaluri (strain 93-146)</name>
    <dbReference type="NCBI Taxonomy" id="634503"/>
    <lineage>
        <taxon>Bacteria</taxon>
        <taxon>Pseudomonadati</taxon>
        <taxon>Pseudomonadota</taxon>
        <taxon>Gammaproteobacteria</taxon>
        <taxon>Enterobacterales</taxon>
        <taxon>Hafniaceae</taxon>
        <taxon>Edwardsiella</taxon>
    </lineage>
</organism>
<proteinExistence type="inferred from homology"/>
<dbReference type="EC" id="4.2.3.4" evidence="1"/>
<dbReference type="EMBL" id="CP001600">
    <property type="protein sequence ID" value="ACR70751.1"/>
    <property type="molecule type" value="Genomic_DNA"/>
</dbReference>
<dbReference type="RefSeq" id="WP_015872792.1">
    <property type="nucleotide sequence ID" value="NZ_CP169062.1"/>
</dbReference>
<dbReference type="SMR" id="C5BGQ4"/>
<dbReference type="STRING" id="67780.B6E78_09775"/>
<dbReference type="GeneID" id="69540466"/>
<dbReference type="KEGG" id="eic:NT01EI_3623"/>
<dbReference type="PATRIC" id="fig|634503.3.peg.3230"/>
<dbReference type="HOGENOM" id="CLU_001201_0_2_6"/>
<dbReference type="OrthoDB" id="9806583at2"/>
<dbReference type="UniPathway" id="UPA00053">
    <property type="reaction ID" value="UER00085"/>
</dbReference>
<dbReference type="Proteomes" id="UP000001485">
    <property type="component" value="Chromosome"/>
</dbReference>
<dbReference type="GO" id="GO:0005737">
    <property type="term" value="C:cytoplasm"/>
    <property type="evidence" value="ECO:0007669"/>
    <property type="project" value="UniProtKB-SubCell"/>
</dbReference>
<dbReference type="GO" id="GO:0003856">
    <property type="term" value="F:3-dehydroquinate synthase activity"/>
    <property type="evidence" value="ECO:0007669"/>
    <property type="project" value="UniProtKB-UniRule"/>
</dbReference>
<dbReference type="GO" id="GO:0046872">
    <property type="term" value="F:metal ion binding"/>
    <property type="evidence" value="ECO:0007669"/>
    <property type="project" value="UniProtKB-KW"/>
</dbReference>
<dbReference type="GO" id="GO:0000166">
    <property type="term" value="F:nucleotide binding"/>
    <property type="evidence" value="ECO:0007669"/>
    <property type="project" value="UniProtKB-KW"/>
</dbReference>
<dbReference type="GO" id="GO:0008652">
    <property type="term" value="P:amino acid biosynthetic process"/>
    <property type="evidence" value="ECO:0007669"/>
    <property type="project" value="UniProtKB-KW"/>
</dbReference>
<dbReference type="GO" id="GO:0009073">
    <property type="term" value="P:aromatic amino acid family biosynthetic process"/>
    <property type="evidence" value="ECO:0007669"/>
    <property type="project" value="UniProtKB-KW"/>
</dbReference>
<dbReference type="GO" id="GO:0009423">
    <property type="term" value="P:chorismate biosynthetic process"/>
    <property type="evidence" value="ECO:0007669"/>
    <property type="project" value="UniProtKB-UniRule"/>
</dbReference>
<dbReference type="CDD" id="cd08195">
    <property type="entry name" value="DHQS"/>
    <property type="match status" value="1"/>
</dbReference>
<dbReference type="FunFam" id="1.20.1090.10:FF:000002">
    <property type="entry name" value="3-dehydroquinate synthase"/>
    <property type="match status" value="1"/>
</dbReference>
<dbReference type="FunFam" id="3.40.50.1970:FF:000001">
    <property type="entry name" value="3-dehydroquinate synthase"/>
    <property type="match status" value="1"/>
</dbReference>
<dbReference type="Gene3D" id="3.40.50.1970">
    <property type="match status" value="1"/>
</dbReference>
<dbReference type="Gene3D" id="1.20.1090.10">
    <property type="entry name" value="Dehydroquinate synthase-like - alpha domain"/>
    <property type="match status" value="1"/>
</dbReference>
<dbReference type="HAMAP" id="MF_00110">
    <property type="entry name" value="DHQ_synthase"/>
    <property type="match status" value="1"/>
</dbReference>
<dbReference type="InterPro" id="IPR050071">
    <property type="entry name" value="Dehydroquinate_synthase"/>
</dbReference>
<dbReference type="InterPro" id="IPR016037">
    <property type="entry name" value="DHQ_synth_AroB"/>
</dbReference>
<dbReference type="InterPro" id="IPR030963">
    <property type="entry name" value="DHQ_synth_fam"/>
</dbReference>
<dbReference type="InterPro" id="IPR030960">
    <property type="entry name" value="DHQS/DOIS_N"/>
</dbReference>
<dbReference type="InterPro" id="IPR056179">
    <property type="entry name" value="DHQS_C"/>
</dbReference>
<dbReference type="NCBIfam" id="TIGR01357">
    <property type="entry name" value="aroB"/>
    <property type="match status" value="1"/>
</dbReference>
<dbReference type="PANTHER" id="PTHR43622">
    <property type="entry name" value="3-DEHYDROQUINATE SYNTHASE"/>
    <property type="match status" value="1"/>
</dbReference>
<dbReference type="PANTHER" id="PTHR43622:SF7">
    <property type="entry name" value="3-DEHYDROQUINATE SYNTHASE, CHLOROPLASTIC"/>
    <property type="match status" value="1"/>
</dbReference>
<dbReference type="Pfam" id="PF01761">
    <property type="entry name" value="DHQ_synthase"/>
    <property type="match status" value="1"/>
</dbReference>
<dbReference type="Pfam" id="PF24621">
    <property type="entry name" value="DHQS_C"/>
    <property type="match status" value="1"/>
</dbReference>
<dbReference type="PIRSF" id="PIRSF001455">
    <property type="entry name" value="DHQ_synth"/>
    <property type="match status" value="1"/>
</dbReference>
<dbReference type="SUPFAM" id="SSF56796">
    <property type="entry name" value="Dehydroquinate synthase-like"/>
    <property type="match status" value="1"/>
</dbReference>
<gene>
    <name evidence="1" type="primary">aroB</name>
    <name type="ordered locus">NT01EI_3623</name>
</gene>
<keyword id="KW-0028">Amino-acid biosynthesis</keyword>
<keyword id="KW-0057">Aromatic amino acid biosynthesis</keyword>
<keyword id="KW-0170">Cobalt</keyword>
<keyword id="KW-0963">Cytoplasm</keyword>
<keyword id="KW-0456">Lyase</keyword>
<keyword id="KW-0479">Metal-binding</keyword>
<keyword id="KW-0520">NAD</keyword>
<keyword id="KW-0547">Nucleotide-binding</keyword>
<keyword id="KW-0862">Zinc</keyword>
<accession>C5BGQ4</accession>
<name>AROB_EDWI9</name>
<feature type="chain" id="PRO_1000202908" description="3-dehydroquinate synthase">
    <location>
        <begin position="1"/>
        <end position="361"/>
    </location>
</feature>
<feature type="binding site" evidence="1">
    <location>
        <begin position="71"/>
        <end position="76"/>
    </location>
    <ligand>
        <name>NAD(+)</name>
        <dbReference type="ChEBI" id="CHEBI:57540"/>
    </ligand>
</feature>
<feature type="binding site" evidence="1">
    <location>
        <begin position="105"/>
        <end position="109"/>
    </location>
    <ligand>
        <name>NAD(+)</name>
        <dbReference type="ChEBI" id="CHEBI:57540"/>
    </ligand>
</feature>
<feature type="binding site" evidence="1">
    <location>
        <begin position="129"/>
        <end position="130"/>
    </location>
    <ligand>
        <name>NAD(+)</name>
        <dbReference type="ChEBI" id="CHEBI:57540"/>
    </ligand>
</feature>
<feature type="binding site" evidence="1">
    <location>
        <position position="142"/>
    </location>
    <ligand>
        <name>NAD(+)</name>
        <dbReference type="ChEBI" id="CHEBI:57540"/>
    </ligand>
</feature>
<feature type="binding site" evidence="1">
    <location>
        <position position="151"/>
    </location>
    <ligand>
        <name>NAD(+)</name>
        <dbReference type="ChEBI" id="CHEBI:57540"/>
    </ligand>
</feature>
<feature type="binding site" evidence="1">
    <location>
        <begin position="169"/>
        <end position="172"/>
    </location>
    <ligand>
        <name>NAD(+)</name>
        <dbReference type="ChEBI" id="CHEBI:57540"/>
    </ligand>
</feature>
<feature type="binding site" evidence="1">
    <location>
        <position position="184"/>
    </location>
    <ligand>
        <name>Zn(2+)</name>
        <dbReference type="ChEBI" id="CHEBI:29105"/>
    </ligand>
</feature>
<feature type="binding site" evidence="1">
    <location>
        <position position="247"/>
    </location>
    <ligand>
        <name>Zn(2+)</name>
        <dbReference type="ChEBI" id="CHEBI:29105"/>
    </ligand>
</feature>
<feature type="binding site" evidence="1">
    <location>
        <position position="264"/>
    </location>
    <ligand>
        <name>Zn(2+)</name>
        <dbReference type="ChEBI" id="CHEBI:29105"/>
    </ligand>
</feature>
<reference key="1">
    <citation type="submission" date="2009-03" db="EMBL/GenBank/DDBJ databases">
        <title>Complete genome sequence of Edwardsiella ictaluri 93-146.</title>
        <authorList>
            <person name="Williams M.L."/>
            <person name="Gillaspy A.F."/>
            <person name="Dyer D.W."/>
            <person name="Thune R.L."/>
            <person name="Waldbieser G.C."/>
            <person name="Schuster S.C."/>
            <person name="Gipson J."/>
            <person name="Zaitshik J."/>
            <person name="Landry C."/>
            <person name="Lawrence M.L."/>
        </authorList>
    </citation>
    <scope>NUCLEOTIDE SEQUENCE [LARGE SCALE GENOMIC DNA]</scope>
    <source>
        <strain>93-146</strain>
    </source>
</reference>
<comment type="function">
    <text evidence="1">Catalyzes the conversion of 3-deoxy-D-arabino-heptulosonate 7-phosphate (DAHP) to dehydroquinate (DHQ).</text>
</comment>
<comment type="catalytic activity">
    <reaction evidence="1">
        <text>7-phospho-2-dehydro-3-deoxy-D-arabino-heptonate = 3-dehydroquinate + phosphate</text>
        <dbReference type="Rhea" id="RHEA:21968"/>
        <dbReference type="ChEBI" id="CHEBI:32364"/>
        <dbReference type="ChEBI" id="CHEBI:43474"/>
        <dbReference type="ChEBI" id="CHEBI:58394"/>
        <dbReference type="EC" id="4.2.3.4"/>
    </reaction>
</comment>
<comment type="cofactor">
    <cofactor evidence="1">
        <name>Co(2+)</name>
        <dbReference type="ChEBI" id="CHEBI:48828"/>
    </cofactor>
    <cofactor evidence="1">
        <name>Zn(2+)</name>
        <dbReference type="ChEBI" id="CHEBI:29105"/>
    </cofactor>
    <text evidence="1">Binds 1 divalent metal cation per subunit. Can use either Co(2+) or Zn(2+).</text>
</comment>
<comment type="cofactor">
    <cofactor evidence="1">
        <name>NAD(+)</name>
        <dbReference type="ChEBI" id="CHEBI:57540"/>
    </cofactor>
</comment>
<comment type="pathway">
    <text evidence="1">Metabolic intermediate biosynthesis; chorismate biosynthesis; chorismate from D-erythrose 4-phosphate and phosphoenolpyruvate: step 2/7.</text>
</comment>
<comment type="subcellular location">
    <subcellularLocation>
        <location evidence="1">Cytoplasm</location>
    </subcellularLocation>
</comment>
<comment type="similarity">
    <text evidence="1">Belongs to the sugar phosphate cyclases superfamily. Dehydroquinate synthase family.</text>
</comment>
<protein>
    <recommendedName>
        <fullName evidence="1">3-dehydroquinate synthase</fullName>
        <shortName evidence="1">DHQS</shortName>
        <ecNumber evidence="1">4.2.3.4</ecNumber>
    </recommendedName>
</protein>
<sequence length="361" mass="39046">MERITVTLGERSYPISIASGLFSQEAAFWPLRSGEQAMLVTNETLAKLYLAPVQRTLERAGVRVGQVILPDGEQFKSLSVLERVFSALLENNHGRDTTLVALGGGVIGDLIGFAAACYQRGVRFIQVPTTLLAQVDSSVGGKTAVNHPLGKNMIGAFYQPASVTIDIDCLQTLPLRELASGLAEVIKYGIIMDADFFRWLETQMDALLRLEPSALVYCIRRCCELKAQVVAEDEREQGRRALLNLGHTFGHAIEAEMGYGNWLHGEAVAAGTMMAARVACRLGYLQPQQAERMSALLTRAGLPVQGPAGMIPDAYLPHMLRDKKVLGGTLRLVLPTAIGSAEVFAGVSHDVVRDAIADCLA</sequence>